<dbReference type="EC" id="2.1.1.189" evidence="1"/>
<dbReference type="EMBL" id="CU928164">
    <property type="protein sequence ID" value="CAR16976.1"/>
    <property type="molecule type" value="Genomic_DNA"/>
</dbReference>
<dbReference type="RefSeq" id="WP_001149709.1">
    <property type="nucleotide sequence ID" value="NC_011750.1"/>
</dbReference>
<dbReference type="RefSeq" id="YP_002406864.1">
    <property type="nucleotide sequence ID" value="NC_011750.1"/>
</dbReference>
<dbReference type="SMR" id="B7NPF5"/>
<dbReference type="STRING" id="585057.ECIAI39_0839"/>
<dbReference type="KEGG" id="ect:ECIAI39_0839"/>
<dbReference type="PATRIC" id="fig|585057.6.peg.884"/>
<dbReference type="HOGENOM" id="CLU_014689_0_0_6"/>
<dbReference type="Proteomes" id="UP000000749">
    <property type="component" value="Chromosome"/>
</dbReference>
<dbReference type="GO" id="GO:0051539">
    <property type="term" value="F:4 iron, 4 sulfur cluster binding"/>
    <property type="evidence" value="ECO:0007669"/>
    <property type="project" value="UniProtKB-KW"/>
</dbReference>
<dbReference type="GO" id="GO:0005506">
    <property type="term" value="F:iron ion binding"/>
    <property type="evidence" value="ECO:0007669"/>
    <property type="project" value="UniProtKB-UniRule"/>
</dbReference>
<dbReference type="GO" id="GO:0070041">
    <property type="term" value="F:rRNA (uridine-C5-)-methyltransferase activity"/>
    <property type="evidence" value="ECO:0007669"/>
    <property type="project" value="UniProtKB-UniRule"/>
</dbReference>
<dbReference type="GO" id="GO:0070475">
    <property type="term" value="P:rRNA base methylation"/>
    <property type="evidence" value="ECO:0007669"/>
    <property type="project" value="TreeGrafter"/>
</dbReference>
<dbReference type="CDD" id="cd02440">
    <property type="entry name" value="AdoMet_MTases"/>
    <property type="match status" value="1"/>
</dbReference>
<dbReference type="FunFam" id="2.40.50.1070:FF:000002">
    <property type="entry name" value="23S rRNA (uracil(747)-C(5))-methyltransferase RlmC"/>
    <property type="match status" value="1"/>
</dbReference>
<dbReference type="FunFam" id="3.40.50.150:FF:000049">
    <property type="entry name" value="23S rRNA (uracil(747)-C(5))-methyltransferase RlmC"/>
    <property type="match status" value="1"/>
</dbReference>
<dbReference type="Gene3D" id="2.40.50.1070">
    <property type="match status" value="1"/>
</dbReference>
<dbReference type="Gene3D" id="3.40.50.150">
    <property type="entry name" value="Vaccinia Virus protein VP39"/>
    <property type="match status" value="1"/>
</dbReference>
<dbReference type="HAMAP" id="MF_01012">
    <property type="entry name" value="23SrRNA_methyltr_RlmC"/>
    <property type="match status" value="1"/>
</dbReference>
<dbReference type="InterPro" id="IPR011825">
    <property type="entry name" value="23SrRNA_MeTrfase_RlmC"/>
</dbReference>
<dbReference type="InterPro" id="IPR030390">
    <property type="entry name" value="MeTrfase_TrmA_AS"/>
</dbReference>
<dbReference type="InterPro" id="IPR030391">
    <property type="entry name" value="MeTrfase_TrmA_CS"/>
</dbReference>
<dbReference type="InterPro" id="IPR029063">
    <property type="entry name" value="SAM-dependent_MTases_sf"/>
</dbReference>
<dbReference type="InterPro" id="IPR010280">
    <property type="entry name" value="U5_MeTrfase_fam"/>
</dbReference>
<dbReference type="NCBIfam" id="TIGR02085">
    <property type="entry name" value="meth_trns_rumB"/>
    <property type="match status" value="1"/>
</dbReference>
<dbReference type="PANTHER" id="PTHR11061">
    <property type="entry name" value="RNA M5U METHYLTRANSFERASE"/>
    <property type="match status" value="1"/>
</dbReference>
<dbReference type="PANTHER" id="PTHR11061:SF30">
    <property type="entry name" value="TRNA (URACIL(54)-C(5))-METHYLTRANSFERASE"/>
    <property type="match status" value="1"/>
</dbReference>
<dbReference type="Pfam" id="PF05958">
    <property type="entry name" value="tRNA_U5-meth_tr"/>
    <property type="match status" value="1"/>
</dbReference>
<dbReference type="SUPFAM" id="SSF53335">
    <property type="entry name" value="S-adenosyl-L-methionine-dependent methyltransferases"/>
    <property type="match status" value="1"/>
</dbReference>
<dbReference type="PROSITE" id="PS51687">
    <property type="entry name" value="SAM_MT_RNA_M5U"/>
    <property type="match status" value="1"/>
</dbReference>
<dbReference type="PROSITE" id="PS01230">
    <property type="entry name" value="TRMA_1"/>
    <property type="match status" value="1"/>
</dbReference>
<dbReference type="PROSITE" id="PS01231">
    <property type="entry name" value="TRMA_2"/>
    <property type="match status" value="1"/>
</dbReference>
<feature type="chain" id="PRO_1000200869" description="23S rRNA (uracil(747)-C(5))-methyltransferase RlmC">
    <location>
        <begin position="1"/>
        <end position="375"/>
    </location>
</feature>
<feature type="active site" description="Nucleophile" evidence="1">
    <location>
        <position position="334"/>
    </location>
</feature>
<feature type="binding site" evidence="1">
    <location>
        <position position="3"/>
    </location>
    <ligand>
        <name>[4Fe-4S] cluster</name>
        <dbReference type="ChEBI" id="CHEBI:49883"/>
    </ligand>
</feature>
<feature type="binding site" evidence="1">
    <location>
        <position position="11"/>
    </location>
    <ligand>
        <name>[4Fe-4S] cluster</name>
        <dbReference type="ChEBI" id="CHEBI:49883"/>
    </ligand>
</feature>
<feature type="binding site" evidence="1">
    <location>
        <position position="14"/>
    </location>
    <ligand>
        <name>[4Fe-4S] cluster</name>
        <dbReference type="ChEBI" id="CHEBI:49883"/>
    </ligand>
</feature>
<feature type="binding site" evidence="1">
    <location>
        <position position="87"/>
    </location>
    <ligand>
        <name>[4Fe-4S] cluster</name>
        <dbReference type="ChEBI" id="CHEBI:49883"/>
    </ligand>
</feature>
<feature type="binding site" evidence="1">
    <location>
        <position position="212"/>
    </location>
    <ligand>
        <name>S-adenosyl-L-methionine</name>
        <dbReference type="ChEBI" id="CHEBI:59789"/>
    </ligand>
</feature>
<feature type="binding site" evidence="1">
    <location>
        <position position="241"/>
    </location>
    <ligand>
        <name>S-adenosyl-L-methionine</name>
        <dbReference type="ChEBI" id="CHEBI:59789"/>
    </ligand>
</feature>
<feature type="binding site" evidence="1">
    <location>
        <position position="262"/>
    </location>
    <ligand>
        <name>S-adenosyl-L-methionine</name>
        <dbReference type="ChEBI" id="CHEBI:59789"/>
    </ligand>
</feature>
<feature type="binding site" evidence="1">
    <location>
        <position position="307"/>
    </location>
    <ligand>
        <name>S-adenosyl-L-methionine</name>
        <dbReference type="ChEBI" id="CHEBI:59789"/>
    </ligand>
</feature>
<protein>
    <recommendedName>
        <fullName evidence="1">23S rRNA (uracil(747)-C(5))-methyltransferase RlmC</fullName>
        <ecNumber evidence="1">2.1.1.189</ecNumber>
    </recommendedName>
    <alternativeName>
        <fullName evidence="1">23S rRNA(m5U747)-methyltransferase</fullName>
    </alternativeName>
</protein>
<accession>B7NPF5</accession>
<organism>
    <name type="scientific">Escherichia coli O7:K1 (strain IAI39 / ExPEC)</name>
    <dbReference type="NCBI Taxonomy" id="585057"/>
    <lineage>
        <taxon>Bacteria</taxon>
        <taxon>Pseudomonadati</taxon>
        <taxon>Pseudomonadota</taxon>
        <taxon>Gammaproteobacteria</taxon>
        <taxon>Enterobacterales</taxon>
        <taxon>Enterobacteriaceae</taxon>
        <taxon>Escherichia</taxon>
    </lineage>
</organism>
<gene>
    <name evidence="1" type="primary">rlmC</name>
    <name type="synonym">rumB</name>
    <name type="ordered locus">ECIAI39_0839</name>
</gene>
<keyword id="KW-0004">4Fe-4S</keyword>
<keyword id="KW-0408">Iron</keyword>
<keyword id="KW-0411">Iron-sulfur</keyword>
<keyword id="KW-0479">Metal-binding</keyword>
<keyword id="KW-0489">Methyltransferase</keyword>
<keyword id="KW-0698">rRNA processing</keyword>
<keyword id="KW-0949">S-adenosyl-L-methionine</keyword>
<keyword id="KW-0808">Transferase</keyword>
<proteinExistence type="inferred from homology"/>
<name>RLMC_ECO7I</name>
<reference key="1">
    <citation type="journal article" date="2009" name="PLoS Genet.">
        <title>Organised genome dynamics in the Escherichia coli species results in highly diverse adaptive paths.</title>
        <authorList>
            <person name="Touchon M."/>
            <person name="Hoede C."/>
            <person name="Tenaillon O."/>
            <person name="Barbe V."/>
            <person name="Baeriswyl S."/>
            <person name="Bidet P."/>
            <person name="Bingen E."/>
            <person name="Bonacorsi S."/>
            <person name="Bouchier C."/>
            <person name="Bouvet O."/>
            <person name="Calteau A."/>
            <person name="Chiapello H."/>
            <person name="Clermont O."/>
            <person name="Cruveiller S."/>
            <person name="Danchin A."/>
            <person name="Diard M."/>
            <person name="Dossat C."/>
            <person name="Karoui M.E."/>
            <person name="Frapy E."/>
            <person name="Garry L."/>
            <person name="Ghigo J.M."/>
            <person name="Gilles A.M."/>
            <person name="Johnson J."/>
            <person name="Le Bouguenec C."/>
            <person name="Lescat M."/>
            <person name="Mangenot S."/>
            <person name="Martinez-Jehanne V."/>
            <person name="Matic I."/>
            <person name="Nassif X."/>
            <person name="Oztas S."/>
            <person name="Petit M.A."/>
            <person name="Pichon C."/>
            <person name="Rouy Z."/>
            <person name="Ruf C.S."/>
            <person name="Schneider D."/>
            <person name="Tourret J."/>
            <person name="Vacherie B."/>
            <person name="Vallenet D."/>
            <person name="Medigue C."/>
            <person name="Rocha E.P.C."/>
            <person name="Denamur E."/>
        </authorList>
    </citation>
    <scope>NUCLEOTIDE SEQUENCE [LARGE SCALE GENOMIC DNA]</scope>
    <source>
        <strain>IAI39 / ExPEC</strain>
    </source>
</reference>
<sequence length="375" mass="41957">MQCALYDAGRCRSCQWITQPIPEQLSAKTADLKNLLADFPVEEWCAPVSGPEQGFRNKAKMVVSGSVEKPLLGMLHRDGTPEDLCDCPLYPASFAPVFAALKPFIARAGLTPYNVARKRGELKYILLTESQSDGGMMLRFVLRSDTKLAQLRKALPWLQEQLPQLKVITVNIQPVHMAIMEGETEIYLTEQQALAERFNDVPLWIRPQSFFQTNPAVASQLYATARDWVRQLPIKHMWDLFCGVGGFGLHCATPDMQLTGIEIAPEAIACAKQSAAELGLTRLQFQALDSTQFASAQGEVPELVLVNPPRRGIGKPLCDYLSTMAPRFIIYSSCNAQTMAKDIRELPGYRIERVQLFDMFPHTAHYEVLTLLVKQ</sequence>
<comment type="function">
    <text evidence="1">Catalyzes the formation of 5-methyl-uridine at position 747 (m5U747) in 23S rRNA.</text>
</comment>
<comment type="catalytic activity">
    <reaction evidence="1">
        <text>uridine(747) in 23S rRNA + S-adenosyl-L-methionine = 5-methyluridine(747) in 23S rRNA + S-adenosyl-L-homocysteine + H(+)</text>
        <dbReference type="Rhea" id="RHEA:42628"/>
        <dbReference type="Rhea" id="RHEA-COMP:10154"/>
        <dbReference type="Rhea" id="RHEA-COMP:10155"/>
        <dbReference type="ChEBI" id="CHEBI:15378"/>
        <dbReference type="ChEBI" id="CHEBI:57856"/>
        <dbReference type="ChEBI" id="CHEBI:59789"/>
        <dbReference type="ChEBI" id="CHEBI:65315"/>
        <dbReference type="ChEBI" id="CHEBI:74447"/>
        <dbReference type="EC" id="2.1.1.189"/>
    </reaction>
</comment>
<comment type="similarity">
    <text evidence="1">Belongs to the class I-like SAM-binding methyltransferase superfamily. RNA M5U methyltransferase family. RlmC subfamily.</text>
</comment>
<evidence type="ECO:0000255" key="1">
    <source>
        <dbReference type="HAMAP-Rule" id="MF_01012"/>
    </source>
</evidence>